<comment type="function">
    <text evidence="1">Antibacterial protein. Putative acid-stable proteinase inhibitor (By similarity).</text>
</comment>
<comment type="subcellular location">
    <subcellularLocation>
        <location evidence="4">Secreted</location>
    </subcellularLocation>
</comment>
<gene>
    <name type="primary">WFDC12</name>
</gene>
<name>WFD12_PONAB</name>
<protein>
    <recommendedName>
        <fullName>WAP four-disulfide core domain protein 12</fullName>
    </recommendedName>
</protein>
<proteinExistence type="inferred from homology"/>
<evidence type="ECO:0000250" key="1"/>
<evidence type="ECO:0000255" key="2"/>
<evidence type="ECO:0000255" key="3">
    <source>
        <dbReference type="PROSITE-ProRule" id="PRU00722"/>
    </source>
</evidence>
<evidence type="ECO:0000305" key="4"/>
<feature type="signal peptide" evidence="2">
    <location>
        <begin position="1"/>
        <end position="23"/>
    </location>
</feature>
<feature type="chain" id="PRO_0000289654" description="WAP four-disulfide core domain protein 12">
    <location>
        <begin position="24"/>
        <end position="90"/>
    </location>
</feature>
<feature type="domain" description="WAP" evidence="3">
    <location>
        <begin position="27"/>
        <end position="74"/>
    </location>
</feature>
<feature type="disulfide bond" evidence="3">
    <location>
        <begin position="34"/>
        <end position="62"/>
    </location>
</feature>
<feature type="disulfide bond" evidence="3">
    <location>
        <begin position="41"/>
        <end position="66"/>
    </location>
</feature>
<feature type="disulfide bond" evidence="3">
    <location>
        <begin position="49"/>
        <end position="61"/>
    </location>
</feature>
<feature type="disulfide bond" evidence="3">
    <location>
        <begin position="55"/>
        <end position="70"/>
    </location>
</feature>
<dbReference type="EMBL" id="DP000045">
    <property type="protein sequence ID" value="ABO52989.1"/>
    <property type="molecule type" value="Genomic_DNA"/>
</dbReference>
<dbReference type="SMR" id="A4K2V4"/>
<dbReference type="STRING" id="9601.ENSPPYP00000012340"/>
<dbReference type="MEROPS" id="I17.003"/>
<dbReference type="eggNOG" id="ENOG502TDXW">
    <property type="taxonomic scope" value="Eukaryota"/>
</dbReference>
<dbReference type="InParanoid" id="A4K2V4"/>
<dbReference type="Proteomes" id="UP000001595">
    <property type="component" value="Unplaced"/>
</dbReference>
<dbReference type="GO" id="GO:0005615">
    <property type="term" value="C:extracellular space"/>
    <property type="evidence" value="ECO:0007669"/>
    <property type="project" value="TreeGrafter"/>
</dbReference>
<dbReference type="GO" id="GO:0004867">
    <property type="term" value="F:serine-type endopeptidase inhibitor activity"/>
    <property type="evidence" value="ECO:0007669"/>
    <property type="project" value="UniProtKB-KW"/>
</dbReference>
<dbReference type="GO" id="GO:0019731">
    <property type="term" value="P:antibacterial humoral response"/>
    <property type="evidence" value="ECO:0007669"/>
    <property type="project" value="TreeGrafter"/>
</dbReference>
<dbReference type="GO" id="GO:0045087">
    <property type="term" value="P:innate immune response"/>
    <property type="evidence" value="ECO:0007669"/>
    <property type="project" value="TreeGrafter"/>
</dbReference>
<dbReference type="FunFam" id="4.10.75.10:FF:000005">
    <property type="entry name" value="WAP four-disulfide core domain protein 12"/>
    <property type="match status" value="1"/>
</dbReference>
<dbReference type="Gene3D" id="4.10.75.10">
    <property type="entry name" value="Elafin-like"/>
    <property type="match status" value="1"/>
</dbReference>
<dbReference type="InterPro" id="IPR036645">
    <property type="entry name" value="Elafin-like_sf"/>
</dbReference>
<dbReference type="InterPro" id="IPR008197">
    <property type="entry name" value="WAP_dom"/>
</dbReference>
<dbReference type="InterPro" id="IPR050514">
    <property type="entry name" value="WAP_four-disulfide_core"/>
</dbReference>
<dbReference type="PANTHER" id="PTHR19441:SF42">
    <property type="entry name" value="WAP FOUR-DISULFIDE CORE DOMAIN PROTEIN 12"/>
    <property type="match status" value="1"/>
</dbReference>
<dbReference type="PANTHER" id="PTHR19441">
    <property type="entry name" value="WHEY ACDIC PROTEIN WAP"/>
    <property type="match status" value="1"/>
</dbReference>
<dbReference type="Pfam" id="PF00095">
    <property type="entry name" value="WAP"/>
    <property type="match status" value="1"/>
</dbReference>
<dbReference type="PRINTS" id="PR00003">
    <property type="entry name" value="4DISULPHCORE"/>
</dbReference>
<dbReference type="SMART" id="SM00217">
    <property type="entry name" value="WAP"/>
    <property type="match status" value="1"/>
</dbReference>
<dbReference type="SUPFAM" id="SSF57256">
    <property type="entry name" value="Elafin-like"/>
    <property type="match status" value="1"/>
</dbReference>
<dbReference type="PROSITE" id="PS51390">
    <property type="entry name" value="WAP"/>
    <property type="match status" value="1"/>
</dbReference>
<organism>
    <name type="scientific">Pongo abelii</name>
    <name type="common">Sumatran orangutan</name>
    <name type="synonym">Pongo pygmaeus abelii</name>
    <dbReference type="NCBI Taxonomy" id="9601"/>
    <lineage>
        <taxon>Eukaryota</taxon>
        <taxon>Metazoa</taxon>
        <taxon>Chordata</taxon>
        <taxon>Craniata</taxon>
        <taxon>Vertebrata</taxon>
        <taxon>Euteleostomi</taxon>
        <taxon>Mammalia</taxon>
        <taxon>Eutheria</taxon>
        <taxon>Euarchontoglires</taxon>
        <taxon>Primates</taxon>
        <taxon>Haplorrhini</taxon>
        <taxon>Catarrhini</taxon>
        <taxon>Hominidae</taxon>
        <taxon>Pongo</taxon>
    </lineage>
</organism>
<accession>A4K2V4</accession>
<keyword id="KW-0044">Antibiotic</keyword>
<keyword id="KW-0929">Antimicrobial</keyword>
<keyword id="KW-1015">Disulfide bond</keyword>
<keyword id="KW-0646">Protease inhibitor</keyword>
<keyword id="KW-1185">Reference proteome</keyword>
<keyword id="KW-0964">Secreted</keyword>
<keyword id="KW-0722">Serine protease inhibitor</keyword>
<keyword id="KW-0732">Signal</keyword>
<reference key="1">
    <citation type="journal article" date="2007" name="Genome Res.">
        <title>Comparative sequence analyses reveal rapid and divergent evolutionary changes of the WFDC locus in the primate lineage.</title>
        <authorList>
            <consortium name="NISC comparative sequencing program"/>
            <person name="Hurle B."/>
            <person name="Swanson W."/>
            <person name="Green E.D."/>
        </authorList>
    </citation>
    <scope>NUCLEOTIDE SEQUENCE [GENOMIC DNA]</scope>
</reference>
<sequence length="90" mass="9730">MGSSSFLVLMVSLALVTLVAVEGVKKGIEKAGVCPADNVRCFKSDPPQCHTDQDCLGERKCCYLHCGFKCVIPVKELEEGGNKDEDVSRP</sequence>